<organism>
    <name type="scientific">Mus musculus</name>
    <name type="common">Mouse</name>
    <dbReference type="NCBI Taxonomy" id="10090"/>
    <lineage>
        <taxon>Eukaryota</taxon>
        <taxon>Metazoa</taxon>
        <taxon>Chordata</taxon>
        <taxon>Craniata</taxon>
        <taxon>Vertebrata</taxon>
        <taxon>Euteleostomi</taxon>
        <taxon>Mammalia</taxon>
        <taxon>Eutheria</taxon>
        <taxon>Euarchontoglires</taxon>
        <taxon>Glires</taxon>
        <taxon>Rodentia</taxon>
        <taxon>Myomorpha</taxon>
        <taxon>Muroidea</taxon>
        <taxon>Muridae</taxon>
        <taxon>Murinae</taxon>
        <taxon>Mus</taxon>
        <taxon>Mus</taxon>
    </lineage>
</organism>
<keyword id="KW-0067">ATP-binding</keyword>
<keyword id="KW-1003">Cell membrane</keyword>
<keyword id="KW-0963">Cytoplasm</keyword>
<keyword id="KW-0206">Cytoskeleton</keyword>
<keyword id="KW-0256">Endoplasmic reticulum</keyword>
<keyword id="KW-0333">Golgi apparatus</keyword>
<keyword id="KW-0418">Kinase</keyword>
<keyword id="KW-0449">Lipoprotein</keyword>
<keyword id="KW-0472">Membrane</keyword>
<keyword id="KW-0519">Myristate</keyword>
<keyword id="KW-0547">Nucleotide-binding</keyword>
<keyword id="KW-0539">Nucleus</keyword>
<keyword id="KW-0564">Palmitate</keyword>
<keyword id="KW-0597">Phosphoprotein</keyword>
<keyword id="KW-1185">Reference proteome</keyword>
<keyword id="KW-0723">Serine/threonine-protein kinase</keyword>
<keyword id="KW-0808">Transferase</keyword>
<feature type="initiator methionine" description="Removed">
    <location>
        <position position="1"/>
    </location>
</feature>
<feature type="chain" id="PRO_0000086168" description="Serine/threonine-protein kinase H1">
    <location>
        <begin position="2"/>
        <end position="424"/>
    </location>
</feature>
<feature type="domain" description="Protein kinase" evidence="4">
    <location>
        <begin position="98"/>
        <end position="355"/>
    </location>
</feature>
<feature type="region of interest" description="Disordered" evidence="6">
    <location>
        <begin position="59"/>
        <end position="79"/>
    </location>
</feature>
<feature type="region of interest" description="Disordered" evidence="6">
    <location>
        <begin position="378"/>
        <end position="408"/>
    </location>
</feature>
<feature type="compositionally biased region" description="Low complexity" evidence="6">
    <location>
        <begin position="381"/>
        <end position="398"/>
    </location>
</feature>
<feature type="active site" description="Proton acceptor" evidence="4 5">
    <location>
        <position position="218"/>
    </location>
</feature>
<feature type="binding site" evidence="4">
    <location>
        <begin position="104"/>
        <end position="112"/>
    </location>
    <ligand>
        <name>ATP</name>
        <dbReference type="ChEBI" id="CHEBI:30616"/>
    </ligand>
</feature>
<feature type="binding site" evidence="4">
    <location>
        <position position="127"/>
    </location>
    <ligand>
        <name>ATP</name>
        <dbReference type="ChEBI" id="CHEBI:30616"/>
    </ligand>
</feature>
<feature type="modified residue" description="Phosphoserine; by autocatalysis" evidence="3">
    <location>
        <position position="380"/>
    </location>
</feature>
<feature type="modified residue" description="Phosphoserine; by autocatalysis" evidence="3">
    <location>
        <position position="381"/>
    </location>
</feature>
<feature type="lipid moiety-binding region" description="N-myristoyl glycine" evidence="1">
    <location>
        <position position="2"/>
    </location>
</feature>
<feature type="lipid moiety-binding region" description="S-palmitoyl cysteine" evidence="1">
    <location>
        <position position="3"/>
    </location>
</feature>
<feature type="sequence variant" description="Mutant animals show features of liver and kidney disease and have ciliary anomalies in bile ducts and renal tubules." evidence="7">
    <original>V</original>
    <variation>D</variation>
    <location>
        <position position="8"/>
    </location>
</feature>
<feature type="sequence conflict" description="In Ref. 1; BAE32682." evidence="8" ref="1">
    <original>G</original>
    <variation>S</variation>
    <location>
        <position position="213"/>
    </location>
</feature>
<comment type="function">
    <text evidence="2">Serine/threonine protein kinase that may be involved in the regulation of pre-mRNA processing. It may phosphorylate components of nuclear splice factor compartments (SFC), such as non-snRNP splicing factors containing a serine/arginine-rich domain (SR proteins). Reversible phosphorylation of SR proteins may cause their release into the nucleoplasm and change their local concentration, thereby influencing alternative splicing.</text>
</comment>
<comment type="catalytic activity">
    <reaction evidence="2">
        <text>L-seryl-[protein] + ATP = O-phospho-L-seryl-[protein] + ADP + H(+)</text>
        <dbReference type="Rhea" id="RHEA:17989"/>
        <dbReference type="Rhea" id="RHEA-COMP:9863"/>
        <dbReference type="Rhea" id="RHEA-COMP:11604"/>
        <dbReference type="ChEBI" id="CHEBI:15378"/>
        <dbReference type="ChEBI" id="CHEBI:29999"/>
        <dbReference type="ChEBI" id="CHEBI:30616"/>
        <dbReference type="ChEBI" id="CHEBI:83421"/>
        <dbReference type="ChEBI" id="CHEBI:456216"/>
        <dbReference type="EC" id="2.7.11.1"/>
    </reaction>
    <physiologicalReaction direction="left-to-right" evidence="2">
        <dbReference type="Rhea" id="RHEA:17990"/>
    </physiologicalReaction>
</comment>
<comment type="catalytic activity">
    <reaction evidence="2">
        <text>L-threonyl-[protein] + ATP = O-phospho-L-threonyl-[protein] + ADP + H(+)</text>
        <dbReference type="Rhea" id="RHEA:46608"/>
        <dbReference type="Rhea" id="RHEA-COMP:11060"/>
        <dbReference type="Rhea" id="RHEA-COMP:11605"/>
        <dbReference type="ChEBI" id="CHEBI:15378"/>
        <dbReference type="ChEBI" id="CHEBI:30013"/>
        <dbReference type="ChEBI" id="CHEBI:30616"/>
        <dbReference type="ChEBI" id="CHEBI:61977"/>
        <dbReference type="ChEBI" id="CHEBI:456216"/>
        <dbReference type="EC" id="2.7.11.1"/>
    </reaction>
    <physiologicalReaction direction="left-to-right" evidence="2">
        <dbReference type="Rhea" id="RHEA:46609"/>
    </physiologicalReaction>
</comment>
<comment type="activity regulation">
    <text evidence="1">Activity depends on Ca(2+) concentration.</text>
</comment>
<comment type="subunit">
    <text evidence="1">Homodimer.</text>
</comment>
<comment type="subcellular location">
    <subcellularLocation>
        <location evidence="1">Golgi apparatus</location>
    </subcellularLocation>
    <subcellularLocation>
        <location evidence="1">Cytoplasm</location>
        <location evidence="1">Cytoskeleton</location>
        <location evidence="1">Microtubule organizing center</location>
        <location evidence="1">Centrosome</location>
    </subcellularLocation>
    <subcellularLocation>
        <location evidence="1">Nucleus speckle</location>
    </subcellularLocation>
    <subcellularLocation>
        <location evidence="1">Endoplasmic reticulum membrane</location>
        <topology evidence="1">Lipid-anchor</topology>
    </subcellularLocation>
    <subcellularLocation>
        <location evidence="1">Cell membrane</location>
        <topology evidence="1">Lipid-anchor</topology>
    </subcellularLocation>
    <subcellularLocation>
        <location evidence="1">Cytoplasm</location>
    </subcellularLocation>
    <text evidence="1">Localized in the brefeldin A- sensitive Golgi compartment, at centrosomes, in the nucleus with a somewhat speckle-like presence, membrane-associated to the endoplasmic reticulum (ER) and the plasma membrane (PM), and more diffusely in the cytoplasm. Found to concentrate in splicing factor compartments (SFCs) within the nucleus of interphase cells. The acylation-negative form may be only cytoplasmic and nuclear. Acylation seems to allow the sequestering to the intracellular membranes. Myristoylation may mediate targeting to the intracellular non-Golgi membranes and palmitoylation may mediate the targeting to the Golgi membranes. Dual acylation is required to stabilize the interaction with Golgi membranes (By similarity).</text>
</comment>
<comment type="PTM">
    <text evidence="1">Autophosphorylated on serine residues.</text>
</comment>
<comment type="PTM">
    <text evidence="1">Myristoylated. Required for membrane association. Prerequisite for palmitoylation to occur (By similarity).</text>
</comment>
<comment type="PTM">
    <text evidence="1">Palmitoylated.</text>
</comment>
<comment type="similarity">
    <text evidence="8">Belongs to the protein kinase superfamily. CAMK Ser/Thr protein kinase family.</text>
</comment>
<gene>
    <name type="primary">Pskh1</name>
</gene>
<protein>
    <recommendedName>
        <fullName>Serine/threonine-protein kinase H1</fullName>
        <ecNumber evidence="2">2.7.11.1</ecNumber>
    </recommendedName>
    <alternativeName>
        <fullName>Protein serine kinase H1</fullName>
        <shortName>PSK-H1</shortName>
    </alternativeName>
</protein>
<name>KPSH1_MOUSE</name>
<reference key="1">
    <citation type="journal article" date="2005" name="Science">
        <title>The transcriptional landscape of the mammalian genome.</title>
        <authorList>
            <person name="Carninci P."/>
            <person name="Kasukawa T."/>
            <person name="Katayama S."/>
            <person name="Gough J."/>
            <person name="Frith M.C."/>
            <person name="Maeda N."/>
            <person name="Oyama R."/>
            <person name="Ravasi T."/>
            <person name="Lenhard B."/>
            <person name="Wells C."/>
            <person name="Kodzius R."/>
            <person name="Shimokawa K."/>
            <person name="Bajic V.B."/>
            <person name="Brenner S.E."/>
            <person name="Batalov S."/>
            <person name="Forrest A.R."/>
            <person name="Zavolan M."/>
            <person name="Davis M.J."/>
            <person name="Wilming L.G."/>
            <person name="Aidinis V."/>
            <person name="Allen J.E."/>
            <person name="Ambesi-Impiombato A."/>
            <person name="Apweiler R."/>
            <person name="Aturaliya R.N."/>
            <person name="Bailey T.L."/>
            <person name="Bansal M."/>
            <person name="Baxter L."/>
            <person name="Beisel K.W."/>
            <person name="Bersano T."/>
            <person name="Bono H."/>
            <person name="Chalk A.M."/>
            <person name="Chiu K.P."/>
            <person name="Choudhary V."/>
            <person name="Christoffels A."/>
            <person name="Clutterbuck D.R."/>
            <person name="Crowe M.L."/>
            <person name="Dalla E."/>
            <person name="Dalrymple B.P."/>
            <person name="de Bono B."/>
            <person name="Della Gatta G."/>
            <person name="di Bernardo D."/>
            <person name="Down T."/>
            <person name="Engstrom P."/>
            <person name="Fagiolini M."/>
            <person name="Faulkner G."/>
            <person name="Fletcher C.F."/>
            <person name="Fukushima T."/>
            <person name="Furuno M."/>
            <person name="Futaki S."/>
            <person name="Gariboldi M."/>
            <person name="Georgii-Hemming P."/>
            <person name="Gingeras T.R."/>
            <person name="Gojobori T."/>
            <person name="Green R.E."/>
            <person name="Gustincich S."/>
            <person name="Harbers M."/>
            <person name="Hayashi Y."/>
            <person name="Hensch T.K."/>
            <person name="Hirokawa N."/>
            <person name="Hill D."/>
            <person name="Huminiecki L."/>
            <person name="Iacono M."/>
            <person name="Ikeo K."/>
            <person name="Iwama A."/>
            <person name="Ishikawa T."/>
            <person name="Jakt M."/>
            <person name="Kanapin A."/>
            <person name="Katoh M."/>
            <person name="Kawasawa Y."/>
            <person name="Kelso J."/>
            <person name="Kitamura H."/>
            <person name="Kitano H."/>
            <person name="Kollias G."/>
            <person name="Krishnan S.P."/>
            <person name="Kruger A."/>
            <person name="Kummerfeld S.K."/>
            <person name="Kurochkin I.V."/>
            <person name="Lareau L.F."/>
            <person name="Lazarevic D."/>
            <person name="Lipovich L."/>
            <person name="Liu J."/>
            <person name="Liuni S."/>
            <person name="McWilliam S."/>
            <person name="Madan Babu M."/>
            <person name="Madera M."/>
            <person name="Marchionni L."/>
            <person name="Matsuda H."/>
            <person name="Matsuzawa S."/>
            <person name="Miki H."/>
            <person name="Mignone F."/>
            <person name="Miyake S."/>
            <person name="Morris K."/>
            <person name="Mottagui-Tabar S."/>
            <person name="Mulder N."/>
            <person name="Nakano N."/>
            <person name="Nakauchi H."/>
            <person name="Ng P."/>
            <person name="Nilsson R."/>
            <person name="Nishiguchi S."/>
            <person name="Nishikawa S."/>
            <person name="Nori F."/>
            <person name="Ohara O."/>
            <person name="Okazaki Y."/>
            <person name="Orlando V."/>
            <person name="Pang K.C."/>
            <person name="Pavan W.J."/>
            <person name="Pavesi G."/>
            <person name="Pesole G."/>
            <person name="Petrovsky N."/>
            <person name="Piazza S."/>
            <person name="Reed J."/>
            <person name="Reid J.F."/>
            <person name="Ring B.Z."/>
            <person name="Ringwald M."/>
            <person name="Rost B."/>
            <person name="Ruan Y."/>
            <person name="Salzberg S.L."/>
            <person name="Sandelin A."/>
            <person name="Schneider C."/>
            <person name="Schoenbach C."/>
            <person name="Sekiguchi K."/>
            <person name="Semple C.A."/>
            <person name="Seno S."/>
            <person name="Sessa L."/>
            <person name="Sheng Y."/>
            <person name="Shibata Y."/>
            <person name="Shimada H."/>
            <person name="Shimada K."/>
            <person name="Silva D."/>
            <person name="Sinclair B."/>
            <person name="Sperling S."/>
            <person name="Stupka E."/>
            <person name="Sugiura K."/>
            <person name="Sultana R."/>
            <person name="Takenaka Y."/>
            <person name="Taki K."/>
            <person name="Tammoja K."/>
            <person name="Tan S.L."/>
            <person name="Tang S."/>
            <person name="Taylor M.S."/>
            <person name="Tegner J."/>
            <person name="Teichmann S.A."/>
            <person name="Ueda H.R."/>
            <person name="van Nimwegen E."/>
            <person name="Verardo R."/>
            <person name="Wei C.L."/>
            <person name="Yagi K."/>
            <person name="Yamanishi H."/>
            <person name="Zabarovsky E."/>
            <person name="Zhu S."/>
            <person name="Zimmer A."/>
            <person name="Hide W."/>
            <person name="Bult C."/>
            <person name="Grimmond S.M."/>
            <person name="Teasdale R.D."/>
            <person name="Liu E.T."/>
            <person name="Brusic V."/>
            <person name="Quackenbush J."/>
            <person name="Wahlestedt C."/>
            <person name="Mattick J.S."/>
            <person name="Hume D.A."/>
            <person name="Kai C."/>
            <person name="Sasaki D."/>
            <person name="Tomaru Y."/>
            <person name="Fukuda S."/>
            <person name="Kanamori-Katayama M."/>
            <person name="Suzuki M."/>
            <person name="Aoki J."/>
            <person name="Arakawa T."/>
            <person name="Iida J."/>
            <person name="Imamura K."/>
            <person name="Itoh M."/>
            <person name="Kato T."/>
            <person name="Kawaji H."/>
            <person name="Kawagashira N."/>
            <person name="Kawashima T."/>
            <person name="Kojima M."/>
            <person name="Kondo S."/>
            <person name="Konno H."/>
            <person name="Nakano K."/>
            <person name="Ninomiya N."/>
            <person name="Nishio T."/>
            <person name="Okada M."/>
            <person name="Plessy C."/>
            <person name="Shibata K."/>
            <person name="Shiraki T."/>
            <person name="Suzuki S."/>
            <person name="Tagami M."/>
            <person name="Waki K."/>
            <person name="Watahiki A."/>
            <person name="Okamura-Oho Y."/>
            <person name="Suzuki H."/>
            <person name="Kawai J."/>
            <person name="Hayashizaki Y."/>
        </authorList>
    </citation>
    <scope>NUCLEOTIDE SEQUENCE [LARGE SCALE MRNA]</scope>
    <source>
        <strain>C57BL/6J</strain>
        <strain>NOD</strain>
        <tissue>Eye</tissue>
        <tissue>Thymus</tissue>
    </source>
</reference>
<reference key="2">
    <citation type="submission" date="2000-02" db="EMBL/GenBank/DDBJ databases">
        <authorList>
            <person name="Bjoernslett M."/>
        </authorList>
    </citation>
    <scope>NUCLEOTIDE SEQUENCE [GENOMIC DNA]</scope>
    <source>
        <strain>129S6/SvEvTac</strain>
        <tissue>Spleen</tissue>
    </source>
</reference>
<reference key="3">
    <citation type="journal article" date="2004" name="Genome Res.">
        <title>The status, quality, and expansion of the NIH full-length cDNA project: the Mammalian Gene Collection (MGC).</title>
        <authorList>
            <consortium name="The MGC Project Team"/>
        </authorList>
    </citation>
    <scope>NUCLEOTIDE SEQUENCE [LARGE SCALE MRNA]</scope>
    <source>
        <tissue>Trophoblast stem cell</tissue>
    </source>
</reference>
<reference key="4">
    <citation type="journal article" date="2024" name="Genet. Med.">
        <title>Large-scale genomic investigation of pediatric cholestasis reveals a novel hepatorenal ciliopathy caused by PSKH1 mutations.</title>
        <authorList>
            <person name="Maddirevula S."/>
            <person name="Shagrani M."/>
            <person name="Ji A.R."/>
            <person name="Horne C.R."/>
            <person name="Young S.N."/>
            <person name="Mather L.J."/>
            <person name="Alqahtani M."/>
            <person name="McKerlie C."/>
            <person name="Wood G."/>
            <person name="Potter P.K."/>
            <person name="Abdulwahab F."/>
            <person name="AlSheddi T."/>
            <person name="van der Woerd W.L."/>
            <person name="van Gassen K.L.I."/>
            <person name="AlBogami D."/>
            <person name="Kumar K."/>
            <person name="Muhammad Akhtar A.S."/>
            <person name="Binomar H."/>
            <person name="Almanea H."/>
            <person name="Faqeih E."/>
            <person name="Fuchs S.A."/>
            <person name="Scott J.W."/>
            <person name="Murphy J.M."/>
            <person name="Alkuraya F.S."/>
        </authorList>
    </citation>
    <scope>MUTAGENESIS OF VAL-8</scope>
</reference>
<proteinExistence type="evidence at transcript level"/>
<sequence>MGCGTSKVLPEPPKDVQLDLVKKVEPFSGTKNDVYKHFITEVDSVGPLKAGFPATSQYAPPCPGVPNTGHTAPPSEPPRRARVAKYRAKFDPRVTAKYDIKALIGRGSFSRVVRVEHRATRQPYAIKMIETKYREGREVCESELRVLRRVRHANIIQLVEVFETQERVYMVMELATGGELFDRIIAKGSFTERDATRVLQMVLDGVRYLHALGITHRDLKPENLLYYHPGTDSKIIITDFGLASARKKGDDCLMKTTCGTPEYIAPEVLVRKPYTNSVDMWALGVIAYILLSGTMPFEDDNRTRLYRQILRGKYSYLGEPWPSVSNLAKDFIDRLLTVDPGARMTALQALRHPWVVSMAASSSMKNLHRSISQNLLKRASSRCQSTKSSQSTRSSRSTRSNKSRRVRERELRELNLRYQQQYNG</sequence>
<dbReference type="EC" id="2.7.11.1" evidence="2"/>
<dbReference type="EMBL" id="AK053397">
    <property type="protein sequence ID" value="BAC35374.1"/>
    <property type="molecule type" value="mRNA"/>
</dbReference>
<dbReference type="EMBL" id="AK153861">
    <property type="protein sequence ID" value="BAE32217.1"/>
    <property type="molecule type" value="mRNA"/>
</dbReference>
<dbReference type="EMBL" id="AF236365">
    <property type="protein sequence ID" value="AAL11033.1"/>
    <property type="molecule type" value="Genomic_DNA"/>
</dbReference>
<dbReference type="EMBL" id="AF236364">
    <property type="protein sequence ID" value="AAL11033.1"/>
    <property type="status" value="JOINED"/>
    <property type="molecule type" value="Genomic_DNA"/>
</dbReference>
<dbReference type="EMBL" id="AK154570">
    <property type="protein sequence ID" value="BAE32682.1"/>
    <property type="molecule type" value="mRNA"/>
</dbReference>
<dbReference type="EMBL" id="BC050128">
    <property type="protein sequence ID" value="AAH50128.1"/>
    <property type="molecule type" value="mRNA"/>
</dbReference>
<dbReference type="CCDS" id="CCDS22619.1"/>
<dbReference type="RefSeq" id="NP_775608.1">
    <property type="nucleotide sequence ID" value="NM_173432.2"/>
</dbReference>
<dbReference type="SMR" id="Q91YA2"/>
<dbReference type="BioGRID" id="232668">
    <property type="interactions" value="1"/>
</dbReference>
<dbReference type="FunCoup" id="Q91YA2">
    <property type="interactions" value="994"/>
</dbReference>
<dbReference type="STRING" id="10090.ENSMUSP00000061700"/>
<dbReference type="iPTMnet" id="Q91YA2"/>
<dbReference type="PhosphoSitePlus" id="Q91YA2"/>
<dbReference type="PaxDb" id="10090-ENSMUSP00000061700"/>
<dbReference type="ProteomicsDB" id="265021"/>
<dbReference type="Antibodypedia" id="29669">
    <property type="antibodies" value="139 antibodies from 30 providers"/>
</dbReference>
<dbReference type="DNASU" id="244631"/>
<dbReference type="Ensembl" id="ENSMUST00000049699.9">
    <property type="protein sequence ID" value="ENSMUSP00000061700.9"/>
    <property type="gene ID" value="ENSMUSG00000048310.9"/>
</dbReference>
<dbReference type="GeneID" id="244631"/>
<dbReference type="KEGG" id="mmu:244631"/>
<dbReference type="UCSC" id="uc009nen.1">
    <property type="organism name" value="mouse"/>
</dbReference>
<dbReference type="AGR" id="MGI:3528383"/>
<dbReference type="CTD" id="5681"/>
<dbReference type="MGI" id="MGI:3528383">
    <property type="gene designation" value="Pskh1"/>
</dbReference>
<dbReference type="VEuPathDB" id="HostDB:ENSMUSG00000048310"/>
<dbReference type="eggNOG" id="KOG0032">
    <property type="taxonomic scope" value="Eukaryota"/>
</dbReference>
<dbReference type="GeneTree" id="ENSGT00940000157041"/>
<dbReference type="HOGENOM" id="CLU_000288_63_0_1"/>
<dbReference type="InParanoid" id="Q91YA2"/>
<dbReference type="OMA" id="SYAGEHW"/>
<dbReference type="OrthoDB" id="40902at2759"/>
<dbReference type="PhylomeDB" id="Q91YA2"/>
<dbReference type="TreeFam" id="TF314166"/>
<dbReference type="BioGRID-ORCS" id="244631">
    <property type="hits" value="1 hit in 79 CRISPR screens"/>
</dbReference>
<dbReference type="ChiTaRS" id="Pskh1">
    <property type="organism name" value="mouse"/>
</dbReference>
<dbReference type="PRO" id="PR:Q91YA2"/>
<dbReference type="Proteomes" id="UP000000589">
    <property type="component" value="Chromosome 8"/>
</dbReference>
<dbReference type="RNAct" id="Q91YA2">
    <property type="molecule type" value="protein"/>
</dbReference>
<dbReference type="Bgee" id="ENSMUSG00000048310">
    <property type="expression patterns" value="Expressed in manus and 184 other cell types or tissues"/>
</dbReference>
<dbReference type="GO" id="GO:0005813">
    <property type="term" value="C:centrosome"/>
    <property type="evidence" value="ECO:0007669"/>
    <property type="project" value="UniProtKB-SubCell"/>
</dbReference>
<dbReference type="GO" id="GO:0005929">
    <property type="term" value="C:cilium"/>
    <property type="evidence" value="ECO:0007669"/>
    <property type="project" value="Ensembl"/>
</dbReference>
<dbReference type="GO" id="GO:0005829">
    <property type="term" value="C:cytosol"/>
    <property type="evidence" value="ECO:0007669"/>
    <property type="project" value="Ensembl"/>
</dbReference>
<dbReference type="GO" id="GO:0005789">
    <property type="term" value="C:endoplasmic reticulum membrane"/>
    <property type="evidence" value="ECO:0007669"/>
    <property type="project" value="UniProtKB-SubCell"/>
</dbReference>
<dbReference type="GO" id="GO:0005794">
    <property type="term" value="C:Golgi apparatus"/>
    <property type="evidence" value="ECO:0007669"/>
    <property type="project" value="UniProtKB-SubCell"/>
</dbReference>
<dbReference type="GO" id="GO:0016607">
    <property type="term" value="C:nuclear speck"/>
    <property type="evidence" value="ECO:0007669"/>
    <property type="project" value="UniProtKB-SubCell"/>
</dbReference>
<dbReference type="GO" id="GO:0005886">
    <property type="term" value="C:plasma membrane"/>
    <property type="evidence" value="ECO:0007669"/>
    <property type="project" value="UniProtKB-SubCell"/>
</dbReference>
<dbReference type="GO" id="GO:0005524">
    <property type="term" value="F:ATP binding"/>
    <property type="evidence" value="ECO:0007669"/>
    <property type="project" value="UniProtKB-KW"/>
</dbReference>
<dbReference type="GO" id="GO:0004672">
    <property type="term" value="F:protein kinase activity"/>
    <property type="evidence" value="ECO:0000314"/>
    <property type="project" value="MGI"/>
</dbReference>
<dbReference type="GO" id="GO:0106310">
    <property type="term" value="F:protein serine kinase activity"/>
    <property type="evidence" value="ECO:0007669"/>
    <property type="project" value="RHEA"/>
</dbReference>
<dbReference type="GO" id="GO:0004674">
    <property type="term" value="F:protein serine/threonine kinase activity"/>
    <property type="evidence" value="ECO:0000250"/>
    <property type="project" value="UniProtKB"/>
</dbReference>
<dbReference type="GO" id="GO:0007368">
    <property type="term" value="P:determination of left/right symmetry"/>
    <property type="evidence" value="ECO:0000315"/>
    <property type="project" value="MGI"/>
</dbReference>
<dbReference type="GO" id="GO:0007507">
    <property type="term" value="P:heart development"/>
    <property type="evidence" value="ECO:0000315"/>
    <property type="project" value="MGI"/>
</dbReference>
<dbReference type="CDD" id="cd14087">
    <property type="entry name" value="STKc_PSKH1"/>
    <property type="match status" value="1"/>
</dbReference>
<dbReference type="FunFam" id="1.10.510.10:FF:000416">
    <property type="entry name" value="Serine/threonine-protein kinase H1"/>
    <property type="match status" value="1"/>
</dbReference>
<dbReference type="Gene3D" id="1.10.510.10">
    <property type="entry name" value="Transferase(Phosphotransferase) domain 1"/>
    <property type="match status" value="1"/>
</dbReference>
<dbReference type="InterPro" id="IPR011009">
    <property type="entry name" value="Kinase-like_dom_sf"/>
</dbReference>
<dbReference type="InterPro" id="IPR000719">
    <property type="entry name" value="Prot_kinase_dom"/>
</dbReference>
<dbReference type="InterPro" id="IPR017441">
    <property type="entry name" value="Protein_kinase_ATP_BS"/>
</dbReference>
<dbReference type="InterPro" id="IPR008271">
    <property type="entry name" value="Ser/Thr_kinase_AS"/>
</dbReference>
<dbReference type="PANTHER" id="PTHR24347">
    <property type="entry name" value="SERINE/THREONINE-PROTEIN KINASE"/>
    <property type="match status" value="1"/>
</dbReference>
<dbReference type="Pfam" id="PF00069">
    <property type="entry name" value="Pkinase"/>
    <property type="match status" value="1"/>
</dbReference>
<dbReference type="SMART" id="SM00220">
    <property type="entry name" value="S_TKc"/>
    <property type="match status" value="1"/>
</dbReference>
<dbReference type="SUPFAM" id="SSF56112">
    <property type="entry name" value="Protein kinase-like (PK-like)"/>
    <property type="match status" value="1"/>
</dbReference>
<dbReference type="PROSITE" id="PS00107">
    <property type="entry name" value="PROTEIN_KINASE_ATP"/>
    <property type="match status" value="1"/>
</dbReference>
<dbReference type="PROSITE" id="PS50011">
    <property type="entry name" value="PROTEIN_KINASE_DOM"/>
    <property type="match status" value="1"/>
</dbReference>
<dbReference type="PROSITE" id="PS00108">
    <property type="entry name" value="PROTEIN_KINASE_ST"/>
    <property type="match status" value="1"/>
</dbReference>
<evidence type="ECO:0000250" key="1"/>
<evidence type="ECO:0000250" key="2">
    <source>
        <dbReference type="UniProtKB" id="P11801"/>
    </source>
</evidence>
<evidence type="ECO:0000255" key="3"/>
<evidence type="ECO:0000255" key="4">
    <source>
        <dbReference type="PROSITE-ProRule" id="PRU00159"/>
    </source>
</evidence>
<evidence type="ECO:0000255" key="5">
    <source>
        <dbReference type="PROSITE-ProRule" id="PRU10027"/>
    </source>
</evidence>
<evidence type="ECO:0000256" key="6">
    <source>
        <dbReference type="SAM" id="MobiDB-lite"/>
    </source>
</evidence>
<evidence type="ECO:0000269" key="7">
    <source>
    </source>
</evidence>
<evidence type="ECO:0000305" key="8"/>
<accession>Q91YA2</accession>
<accession>Q3U3V3</accession>